<accession>Q9C9G7</accession>
<accession>Q9ZTD3</accession>
<proteinExistence type="evidence at transcript level"/>
<dbReference type="EMBL" id="AY519568">
    <property type="protein sequence ID" value="AAS10038.1"/>
    <property type="molecule type" value="mRNA"/>
</dbReference>
<dbReference type="EMBL" id="AC016447">
    <property type="protein sequence ID" value="AAG52612.1"/>
    <property type="molecule type" value="Genomic_DNA"/>
</dbReference>
<dbReference type="EMBL" id="CP002684">
    <property type="protein sequence ID" value="AEE34781.1"/>
    <property type="molecule type" value="Genomic_DNA"/>
</dbReference>
<dbReference type="EMBL" id="AF062897">
    <property type="protein sequence ID" value="AAC83619.1"/>
    <property type="molecule type" value="mRNA"/>
</dbReference>
<dbReference type="PIR" id="H96706">
    <property type="entry name" value="H96706"/>
</dbReference>
<dbReference type="PIR" id="T51669">
    <property type="entry name" value="T51669"/>
</dbReference>
<dbReference type="RefSeq" id="NP_176999.1">
    <property type="nucleotide sequence ID" value="NM_105503.3"/>
</dbReference>
<dbReference type="SMR" id="Q9C9G7"/>
<dbReference type="IntAct" id="Q9C9G7">
    <property type="interactions" value="16"/>
</dbReference>
<dbReference type="STRING" id="3702.Q9C9G7"/>
<dbReference type="PaxDb" id="3702-AT1G68320.1"/>
<dbReference type="EnsemblPlants" id="AT1G68320.1">
    <property type="protein sequence ID" value="AT1G68320.1"/>
    <property type="gene ID" value="AT1G68320"/>
</dbReference>
<dbReference type="GeneID" id="843161"/>
<dbReference type="Gramene" id="AT1G68320.1">
    <property type="protein sequence ID" value="AT1G68320.1"/>
    <property type="gene ID" value="AT1G68320"/>
</dbReference>
<dbReference type="KEGG" id="ath:AT1G68320"/>
<dbReference type="Araport" id="AT1G68320"/>
<dbReference type="TAIR" id="AT1G68320">
    <property type="gene designation" value="MYB62"/>
</dbReference>
<dbReference type="eggNOG" id="KOG0048">
    <property type="taxonomic scope" value="Eukaryota"/>
</dbReference>
<dbReference type="HOGENOM" id="CLU_028567_8_2_1"/>
<dbReference type="InParanoid" id="Q9C9G7"/>
<dbReference type="OMA" id="SMCFHEG"/>
<dbReference type="PhylomeDB" id="Q9C9G7"/>
<dbReference type="PRO" id="PR:Q9C9G7"/>
<dbReference type="Proteomes" id="UP000006548">
    <property type="component" value="Chromosome 1"/>
</dbReference>
<dbReference type="ExpressionAtlas" id="Q9C9G7">
    <property type="expression patterns" value="baseline and differential"/>
</dbReference>
<dbReference type="GO" id="GO:0005634">
    <property type="term" value="C:nucleus"/>
    <property type="evidence" value="ECO:0000314"/>
    <property type="project" value="TAIR"/>
</dbReference>
<dbReference type="GO" id="GO:0003700">
    <property type="term" value="F:DNA-binding transcription factor activity"/>
    <property type="evidence" value="ECO:0000250"/>
    <property type="project" value="TAIR"/>
</dbReference>
<dbReference type="GO" id="GO:0043565">
    <property type="term" value="F:sequence-specific DNA binding"/>
    <property type="evidence" value="ECO:0007669"/>
    <property type="project" value="InterPro"/>
</dbReference>
<dbReference type="GO" id="GO:0016036">
    <property type="term" value="P:cellular response to phosphate starvation"/>
    <property type="evidence" value="ECO:0000270"/>
    <property type="project" value="TAIR"/>
</dbReference>
<dbReference type="GO" id="GO:0009740">
    <property type="term" value="P:gibberellic acid mediated signaling pathway"/>
    <property type="evidence" value="ECO:0007669"/>
    <property type="project" value="UniProtKB-KW"/>
</dbReference>
<dbReference type="GO" id="GO:0009686">
    <property type="term" value="P:gibberellin biosynthetic process"/>
    <property type="evidence" value="ECO:0000315"/>
    <property type="project" value="TAIR"/>
</dbReference>
<dbReference type="GO" id="GO:0045892">
    <property type="term" value="P:negative regulation of DNA-templated transcription"/>
    <property type="evidence" value="ECO:0000315"/>
    <property type="project" value="UniProtKB"/>
</dbReference>
<dbReference type="GO" id="GO:0010373">
    <property type="term" value="P:negative regulation of gibberellin biosynthetic process"/>
    <property type="evidence" value="ECO:0000315"/>
    <property type="project" value="UniProtKB"/>
</dbReference>
<dbReference type="GO" id="GO:0055062">
    <property type="term" value="P:phosphate ion homeostasis"/>
    <property type="evidence" value="ECO:0000315"/>
    <property type="project" value="UniProtKB"/>
</dbReference>
<dbReference type="GO" id="GO:0010015">
    <property type="term" value="P:root morphogenesis"/>
    <property type="evidence" value="ECO:0000315"/>
    <property type="project" value="UniProtKB"/>
</dbReference>
<dbReference type="CDD" id="cd00167">
    <property type="entry name" value="SANT"/>
    <property type="match status" value="2"/>
</dbReference>
<dbReference type="FunFam" id="1.10.10.60:FF:000107">
    <property type="entry name" value="MYB transcription factor"/>
    <property type="match status" value="1"/>
</dbReference>
<dbReference type="FunFam" id="1.10.10.60:FF:000011">
    <property type="entry name" value="Myb transcription factor"/>
    <property type="match status" value="1"/>
</dbReference>
<dbReference type="Gene3D" id="1.10.10.60">
    <property type="entry name" value="Homeodomain-like"/>
    <property type="match status" value="2"/>
</dbReference>
<dbReference type="InterPro" id="IPR044676">
    <property type="entry name" value="EOBI/EOBII-like_plant"/>
</dbReference>
<dbReference type="InterPro" id="IPR009057">
    <property type="entry name" value="Homeodomain-like_sf"/>
</dbReference>
<dbReference type="InterPro" id="IPR017930">
    <property type="entry name" value="Myb_dom"/>
</dbReference>
<dbReference type="InterPro" id="IPR001005">
    <property type="entry name" value="SANT/Myb"/>
</dbReference>
<dbReference type="PANTHER" id="PTHR45675">
    <property type="entry name" value="MYB TRANSCRIPTION FACTOR-RELATED-RELATED"/>
    <property type="match status" value="1"/>
</dbReference>
<dbReference type="PANTHER" id="PTHR45675:SF30">
    <property type="entry name" value="TRANSCRIPTION FACTOR MYB62"/>
    <property type="match status" value="1"/>
</dbReference>
<dbReference type="Pfam" id="PF00249">
    <property type="entry name" value="Myb_DNA-binding"/>
    <property type="match status" value="2"/>
</dbReference>
<dbReference type="SMART" id="SM00717">
    <property type="entry name" value="SANT"/>
    <property type="match status" value="2"/>
</dbReference>
<dbReference type="SUPFAM" id="SSF46689">
    <property type="entry name" value="Homeodomain-like"/>
    <property type="match status" value="1"/>
</dbReference>
<dbReference type="PROSITE" id="PS51294">
    <property type="entry name" value="HTH_MYB"/>
    <property type="match status" value="2"/>
</dbReference>
<sequence>MENSMKKKKSFKESEDEELRRGPWTLEEDTLLTNYILHNGEGRWNHVAKCAGLKRTGKSCRLRWLNYLKPDIRRGNLTPQEQLLILELHSKWGNRWSKIAQYLPGRTDNEIKNYWRTRVQKQARQLNIESNSDKFFDAVRSFWVPRLIEKMEQNSSTTTTYCCPQNNNNNSLLLPSQSHDSLSMQKDIDYSGFSNIDGSSSTSTCMSHLTTVPHFMDQSNTNIIDGSMCFHEGNVQEFGGYVPGMEDYMVNSDISMECHVADGYSAYEDVTQDPMWNVDDIWQFRE</sequence>
<protein>
    <recommendedName>
        <fullName evidence="4">Transcription factor MYB62</fullName>
    </recommendedName>
    <alternativeName>
        <fullName evidence="4">Myb-related protein 62</fullName>
        <shortName evidence="4">AtMYB62</shortName>
    </alternativeName>
</protein>
<reference key="1">
    <citation type="submission" date="2004-01" db="EMBL/GenBank/DDBJ databases">
        <title>The MYB transcription factor family in Arabidopsis: A genome-wide cloning and expression pattern analysis.</title>
        <authorList>
            <person name="Qu L."/>
            <person name="Gu H."/>
        </authorList>
    </citation>
    <scope>NUCLEOTIDE SEQUENCE [MRNA]</scope>
</reference>
<reference key="2">
    <citation type="journal article" date="2000" name="Nature">
        <title>Sequence and analysis of chromosome 1 of the plant Arabidopsis thaliana.</title>
        <authorList>
            <person name="Theologis A."/>
            <person name="Ecker J.R."/>
            <person name="Palm C.J."/>
            <person name="Federspiel N.A."/>
            <person name="Kaul S."/>
            <person name="White O."/>
            <person name="Alonso J."/>
            <person name="Altafi H."/>
            <person name="Araujo R."/>
            <person name="Bowman C.L."/>
            <person name="Brooks S.Y."/>
            <person name="Buehler E."/>
            <person name="Chan A."/>
            <person name="Chao Q."/>
            <person name="Chen H."/>
            <person name="Cheuk R.F."/>
            <person name="Chin C.W."/>
            <person name="Chung M.K."/>
            <person name="Conn L."/>
            <person name="Conway A.B."/>
            <person name="Conway A.R."/>
            <person name="Creasy T.H."/>
            <person name="Dewar K."/>
            <person name="Dunn P."/>
            <person name="Etgu P."/>
            <person name="Feldblyum T.V."/>
            <person name="Feng J.-D."/>
            <person name="Fong B."/>
            <person name="Fujii C.Y."/>
            <person name="Gill J.E."/>
            <person name="Goldsmith A.D."/>
            <person name="Haas B."/>
            <person name="Hansen N.F."/>
            <person name="Hughes B."/>
            <person name="Huizar L."/>
            <person name="Hunter J.L."/>
            <person name="Jenkins J."/>
            <person name="Johnson-Hopson C."/>
            <person name="Khan S."/>
            <person name="Khaykin E."/>
            <person name="Kim C.J."/>
            <person name="Koo H.L."/>
            <person name="Kremenetskaia I."/>
            <person name="Kurtz D.B."/>
            <person name="Kwan A."/>
            <person name="Lam B."/>
            <person name="Langin-Hooper S."/>
            <person name="Lee A."/>
            <person name="Lee J.M."/>
            <person name="Lenz C.A."/>
            <person name="Li J.H."/>
            <person name="Li Y.-P."/>
            <person name="Lin X."/>
            <person name="Liu S.X."/>
            <person name="Liu Z.A."/>
            <person name="Luros J.S."/>
            <person name="Maiti R."/>
            <person name="Marziali A."/>
            <person name="Militscher J."/>
            <person name="Miranda M."/>
            <person name="Nguyen M."/>
            <person name="Nierman W.C."/>
            <person name="Osborne B.I."/>
            <person name="Pai G."/>
            <person name="Peterson J."/>
            <person name="Pham P.K."/>
            <person name="Rizzo M."/>
            <person name="Rooney T."/>
            <person name="Rowley D."/>
            <person name="Sakano H."/>
            <person name="Salzberg S.L."/>
            <person name="Schwartz J.R."/>
            <person name="Shinn P."/>
            <person name="Southwick A.M."/>
            <person name="Sun H."/>
            <person name="Tallon L.J."/>
            <person name="Tambunga G."/>
            <person name="Toriumi M.J."/>
            <person name="Town C.D."/>
            <person name="Utterback T."/>
            <person name="Van Aken S."/>
            <person name="Vaysberg M."/>
            <person name="Vysotskaia V.S."/>
            <person name="Walker M."/>
            <person name="Wu D."/>
            <person name="Yu G."/>
            <person name="Fraser C.M."/>
            <person name="Venter J.C."/>
            <person name="Davis R.W."/>
        </authorList>
    </citation>
    <scope>NUCLEOTIDE SEQUENCE [LARGE SCALE GENOMIC DNA]</scope>
    <source>
        <strain>cv. Columbia</strain>
    </source>
</reference>
<reference key="3">
    <citation type="journal article" date="2017" name="Plant J.">
        <title>Araport11: a complete reannotation of the Arabidopsis thaliana reference genome.</title>
        <authorList>
            <person name="Cheng C.Y."/>
            <person name="Krishnakumar V."/>
            <person name="Chan A.P."/>
            <person name="Thibaud-Nissen F."/>
            <person name="Schobel S."/>
            <person name="Town C.D."/>
        </authorList>
    </citation>
    <scope>GENOME REANNOTATION</scope>
    <source>
        <strain>cv. Columbia</strain>
    </source>
</reference>
<reference key="4">
    <citation type="journal article" date="1998" name="Plant J.">
        <title>Towards functional characterisation of the members of the R2R3-MYB gene family from Arabidopsis thaliana.</title>
        <authorList>
            <person name="Kranz H.D."/>
            <person name="Denekamp M."/>
            <person name="Greco R."/>
            <person name="Jin H.-L."/>
            <person name="Leyva A."/>
            <person name="Meissner R.C."/>
            <person name="Petroni K."/>
            <person name="Urzainqui A."/>
            <person name="Bevan M."/>
            <person name="Martin C."/>
            <person name="Smeekens S."/>
            <person name="Tonelli C."/>
            <person name="Paz-Ares J."/>
            <person name="Weisshaar B."/>
        </authorList>
    </citation>
    <scope>NUCLEOTIDE SEQUENCE [MRNA] OF 83-286</scope>
    <scope>GENE FAMILY</scope>
    <scope>NOMENCLATURE</scope>
    <source>
        <strain>cv. Columbia</strain>
    </source>
</reference>
<reference key="5">
    <citation type="journal article" date="1998" name="Plant J.">
        <title>More than 80 R2R3-MYB regulatory genes in the genome of Arabidopsis thaliana.</title>
        <authorList>
            <person name="Romero I."/>
            <person name="Fuertes A."/>
            <person name="Benito M.J."/>
            <person name="Malpica J.M."/>
            <person name="Leyva A."/>
            <person name="Paz-Ares J."/>
        </authorList>
    </citation>
    <scope>GENE FAMILY</scope>
</reference>
<reference key="6">
    <citation type="journal article" date="2001" name="Curr. Opin. Plant Biol.">
        <title>The R2R3-MYB gene family in Arabidopsis thaliana.</title>
        <authorList>
            <person name="Stracke R."/>
            <person name="Werber M."/>
            <person name="Weisshaar B."/>
        </authorList>
    </citation>
    <scope>GENE FAMILY</scope>
    <scope>NOMENCLATURE</scope>
    <source>
        <strain>cv. Columbia</strain>
    </source>
</reference>
<reference key="7">
    <citation type="journal article" date="2006" name="Plant Mol. Biol.">
        <title>The MYB transcription factor superfamily of Arabidopsis: expression analysis and phylogenetic comparison with the rice MYB family.</title>
        <authorList>
            <person name="Chen Y."/>
            <person name="Yang X."/>
            <person name="He K."/>
            <person name="Liu M."/>
            <person name="Li J."/>
            <person name="Gao Z."/>
            <person name="Lin Z."/>
            <person name="Zhang Y."/>
            <person name="Wang X."/>
            <person name="Qiu X."/>
            <person name="Shen Y."/>
            <person name="Zhang L."/>
            <person name="Deng X."/>
            <person name="Luo J."/>
            <person name="Deng X.-W."/>
            <person name="Chen Z."/>
            <person name="Gu H."/>
            <person name="Qu L.-J."/>
        </authorList>
    </citation>
    <scope>INDUCTION BY SALICYLIC ACID</scope>
    <scope>GENE FAMILY</scope>
</reference>
<reference key="8">
    <citation type="journal article" date="2009" name="Mol. Plant">
        <title>Phosphate starvation responses and gibberellic acid biosynthesis are regulated by the MYB62 transcription factor in Arabidopsis.</title>
        <authorList>
            <person name="Devaiah B.N."/>
            <person name="Madhuvanthi R."/>
            <person name="Karthikeyan A.S."/>
            <person name="Raghothama K.G."/>
        </authorList>
    </citation>
    <scope>FUNCTION</scope>
    <scope>INDUCTION BY PHOSPHATE DEFICIENCY</scope>
    <scope>SUBCELLULAR LOCATION</scope>
    <scope>TISSUE SPECIFICITY</scope>
    <source>
        <strain>cv. Columbia</strain>
    </source>
</reference>
<organism>
    <name type="scientific">Arabidopsis thaliana</name>
    <name type="common">Mouse-ear cress</name>
    <dbReference type="NCBI Taxonomy" id="3702"/>
    <lineage>
        <taxon>Eukaryota</taxon>
        <taxon>Viridiplantae</taxon>
        <taxon>Streptophyta</taxon>
        <taxon>Embryophyta</taxon>
        <taxon>Tracheophyta</taxon>
        <taxon>Spermatophyta</taxon>
        <taxon>Magnoliopsida</taxon>
        <taxon>eudicotyledons</taxon>
        <taxon>Gunneridae</taxon>
        <taxon>Pentapetalae</taxon>
        <taxon>rosids</taxon>
        <taxon>malvids</taxon>
        <taxon>Brassicales</taxon>
        <taxon>Brassicaceae</taxon>
        <taxon>Camelineae</taxon>
        <taxon>Arabidopsis</taxon>
    </lineage>
</organism>
<keyword id="KW-0238">DNA-binding</keyword>
<keyword id="KW-0939">Gibberellin signaling pathway</keyword>
<keyword id="KW-0539">Nucleus</keyword>
<keyword id="KW-1185">Reference proteome</keyword>
<keyword id="KW-0677">Repeat</keyword>
<keyword id="KW-0678">Repressor</keyword>
<keyword id="KW-0804">Transcription</keyword>
<keyword id="KW-0805">Transcription regulation</keyword>
<gene>
    <name evidence="4" type="primary">MYB62</name>
    <name evidence="5" type="ordered locus">At1g68320</name>
    <name evidence="6" type="ORF">T22E19.5</name>
</gene>
<name>MYB62_ARATH</name>
<comment type="function">
    <text evidence="3">Transcription repressor of phosphate (Pi) starvation-induced genes. Negatively regulates Pi starvation responses via the repression of gibberellic acid (GA) biosynthesis and signaling. Modulates root architecture, phosphatase activity, and Pi uptake and accumulation.</text>
</comment>
<comment type="subcellular location">
    <subcellularLocation>
        <location evidence="1 3">Nucleus</location>
    </subcellularLocation>
</comment>
<comment type="tissue specificity">
    <text evidence="3">Expressed in leaves and flowers.</text>
</comment>
<comment type="induction">
    <text evidence="2 3">Slightly induced by salicylic acid (PubMed:16463103). Induced reversibly in response to phosphate (Pi) deficiency but repressed in the presence of Pi, specifically in the leaves. Availability of Pi increases with decreased levels (PubMed:19529828).</text>
</comment>
<evidence type="ECO:0000255" key="1">
    <source>
        <dbReference type="PROSITE-ProRule" id="PRU00625"/>
    </source>
</evidence>
<evidence type="ECO:0000269" key="2">
    <source>
    </source>
</evidence>
<evidence type="ECO:0000269" key="3">
    <source>
    </source>
</evidence>
<evidence type="ECO:0000303" key="4">
    <source>
    </source>
</evidence>
<evidence type="ECO:0000312" key="5">
    <source>
        <dbReference type="Araport" id="AT1G68320"/>
    </source>
</evidence>
<evidence type="ECO:0000312" key="6">
    <source>
        <dbReference type="EMBL" id="AAG52612.1"/>
    </source>
</evidence>
<feature type="chain" id="PRO_0000438966" description="Transcription factor MYB62">
    <location>
        <begin position="1"/>
        <end position="286"/>
    </location>
</feature>
<feature type="domain" description="HTH myb-type 1" evidence="1">
    <location>
        <begin position="16"/>
        <end position="68"/>
    </location>
</feature>
<feature type="domain" description="HTH myb-type 2" evidence="1">
    <location>
        <begin position="69"/>
        <end position="123"/>
    </location>
</feature>
<feature type="DNA-binding region" description="H-T-H motif" evidence="1">
    <location>
        <begin position="44"/>
        <end position="68"/>
    </location>
</feature>
<feature type="DNA-binding region" description="H-T-H motif" evidence="1">
    <location>
        <begin position="96"/>
        <end position="119"/>
    </location>
</feature>